<name>TI11C_ORYSJ</name>
<feature type="chain" id="PRO_0000434856" description="Protein TIFY 11c">
    <location>
        <begin position="1"/>
        <end position="209"/>
    </location>
</feature>
<feature type="domain" description="Tify" evidence="3">
    <location>
        <begin position="93"/>
        <end position="128"/>
    </location>
</feature>
<feature type="region of interest" description="Disordered" evidence="5">
    <location>
        <begin position="175"/>
        <end position="209"/>
    </location>
</feature>
<feature type="short sequence motif" description="Jas" evidence="2">
    <location>
        <begin position="153"/>
        <end position="177"/>
    </location>
</feature>
<feature type="short sequence motif" description="Nuclear localization signal" evidence="4">
    <location>
        <begin position="155"/>
        <end position="162"/>
    </location>
</feature>
<feature type="compositionally biased region" description="Basic and acidic residues" evidence="5">
    <location>
        <begin position="179"/>
        <end position="196"/>
    </location>
</feature>
<evidence type="ECO:0000250" key="1">
    <source>
        <dbReference type="UniProtKB" id="Q7XPM8"/>
    </source>
</evidence>
<evidence type="ECO:0000255" key="2"/>
<evidence type="ECO:0000255" key="3">
    <source>
        <dbReference type="PROSITE-ProRule" id="PRU00650"/>
    </source>
</evidence>
<evidence type="ECO:0000255" key="4">
    <source>
        <dbReference type="PROSITE-ProRule" id="PRU00768"/>
    </source>
</evidence>
<evidence type="ECO:0000256" key="5">
    <source>
        <dbReference type="SAM" id="MobiDB-lite"/>
    </source>
</evidence>
<evidence type="ECO:0000269" key="6">
    <source>
    </source>
</evidence>
<evidence type="ECO:0000269" key="7">
    <source>
    </source>
</evidence>
<evidence type="ECO:0000269" key="8">
    <source>
    </source>
</evidence>
<evidence type="ECO:0000269" key="9">
    <source>
    </source>
</evidence>
<evidence type="ECO:0000303" key="10">
    <source>
    </source>
</evidence>
<evidence type="ECO:0000305" key="11"/>
<evidence type="ECO:0000312" key="12">
    <source>
        <dbReference type="EMBL" id="AAN65439.1"/>
    </source>
</evidence>
<evidence type="ECO:0000312" key="13">
    <source>
        <dbReference type="EMBL" id="AAO13483.1"/>
    </source>
</evidence>
<evidence type="ECO:0000312" key="14">
    <source>
        <dbReference type="EMBL" id="ABF94310.1"/>
    </source>
</evidence>
<evidence type="ECO:0000312" key="15">
    <source>
        <dbReference type="EMBL" id="BAF11081.1"/>
    </source>
</evidence>
<comment type="function">
    <text evidence="1">Repressor of jasmonate responses.</text>
</comment>
<comment type="subunit">
    <text evidence="7 8 9">Interacts with BHLH148 (PubMed:21332845). Interacts with COI1A, COI1B and COI2 in a coronatine-dependent manner. Coronatine is an analog of jasmonoyl isoleucine (JA-Ile) (PubMed:23320078). Interacts with RSS3 (PubMed:23715469).</text>
</comment>
<comment type="subcellular location">
    <subcellularLocation>
        <location evidence="4">Nucleus</location>
    </subcellularLocation>
</comment>
<comment type="induction">
    <text evidence="6 7">By methyl jasmonate (MeJA), and drought and salt stresses (PubMed:19618278, PubMed:21332845). Induced by wounding (PubMed:19618278).</text>
</comment>
<comment type="domain">
    <text evidence="1">The jas domain (153-177) is required for interaction with COI1.</text>
</comment>
<comment type="PTM">
    <text evidence="1">Ubiquitinated. Targeted for degradation by the SCF(COI1) E3 ubiquitin ligase-proteasome pathway during jasmonate signaling.</text>
</comment>
<comment type="similarity">
    <text evidence="11">Belongs to the TIFY/JAZ family.</text>
</comment>
<accession>Q8GRS2</accession>
<accession>A0A0P0VTW6</accession>
<reference key="1">
    <citation type="journal article" date="2005" name="Genome Res.">
        <title>Sequence, annotation, and analysis of synteny between rice chromosome 3 and diverged grass species.</title>
        <authorList>
            <consortium name="The rice chromosome 3 sequencing consortium"/>
            <person name="Buell C.R."/>
            <person name="Yuan Q."/>
            <person name="Ouyang S."/>
            <person name="Liu J."/>
            <person name="Zhu W."/>
            <person name="Wang A."/>
            <person name="Maiti R."/>
            <person name="Haas B."/>
            <person name="Wortman J."/>
            <person name="Pertea M."/>
            <person name="Jones K.M."/>
            <person name="Kim M."/>
            <person name="Overton L."/>
            <person name="Tsitrin T."/>
            <person name="Fadrosh D."/>
            <person name="Bera J."/>
            <person name="Weaver B."/>
            <person name="Jin S."/>
            <person name="Johri S."/>
            <person name="Reardon M."/>
            <person name="Webb K."/>
            <person name="Hill J."/>
            <person name="Moffat K."/>
            <person name="Tallon L."/>
            <person name="Van Aken S."/>
            <person name="Lewis M."/>
            <person name="Utterback T."/>
            <person name="Feldblyum T."/>
            <person name="Zismann V."/>
            <person name="Iobst S."/>
            <person name="Hsiao J."/>
            <person name="de Vazeille A.R."/>
            <person name="Salzberg S.L."/>
            <person name="White O."/>
            <person name="Fraser C.M."/>
            <person name="Yu Y."/>
            <person name="Kim H."/>
            <person name="Rambo T."/>
            <person name="Currie J."/>
            <person name="Collura K."/>
            <person name="Kernodle-Thompson S."/>
            <person name="Wei F."/>
            <person name="Kudrna K."/>
            <person name="Ammiraju J.S.S."/>
            <person name="Luo M."/>
            <person name="Goicoechea J.L."/>
            <person name="Wing R.A."/>
            <person name="Henry D."/>
            <person name="Oates R."/>
            <person name="Palmer M."/>
            <person name="Pries G."/>
            <person name="Saski C."/>
            <person name="Simmons J."/>
            <person name="Soderlund C."/>
            <person name="Nelson W."/>
            <person name="de la Bastide M."/>
            <person name="Spiegel L."/>
            <person name="Nascimento L."/>
            <person name="Huang E."/>
            <person name="Preston R."/>
            <person name="Zutavern T."/>
            <person name="Palmer L."/>
            <person name="O'Shaughnessy A."/>
            <person name="Dike S."/>
            <person name="McCombie W.R."/>
            <person name="Minx P."/>
            <person name="Cordum H."/>
            <person name="Wilson R."/>
            <person name="Jin W."/>
            <person name="Lee H.R."/>
            <person name="Jiang J."/>
            <person name="Jackson S."/>
        </authorList>
    </citation>
    <scope>NUCLEOTIDE SEQUENCE [LARGE SCALE GENOMIC DNA]</scope>
    <source>
        <strain>cv. Nipponbare</strain>
    </source>
</reference>
<reference key="2">
    <citation type="journal article" date="2005" name="Nature">
        <title>The map-based sequence of the rice genome.</title>
        <authorList>
            <consortium name="International rice genome sequencing project (IRGSP)"/>
        </authorList>
    </citation>
    <scope>NUCLEOTIDE SEQUENCE [LARGE SCALE GENOMIC DNA]</scope>
    <source>
        <strain>cv. Nipponbare</strain>
    </source>
</reference>
<reference key="3">
    <citation type="journal article" date="2008" name="Nucleic Acids Res.">
        <title>The rice annotation project database (RAP-DB): 2008 update.</title>
        <authorList>
            <consortium name="The rice annotation project (RAP)"/>
        </authorList>
    </citation>
    <scope>GENOME REANNOTATION</scope>
    <source>
        <strain>cv. Nipponbare</strain>
    </source>
</reference>
<reference key="4">
    <citation type="journal article" date="2013" name="Rice">
        <title>Improvement of the Oryza sativa Nipponbare reference genome using next generation sequence and optical map data.</title>
        <authorList>
            <person name="Kawahara Y."/>
            <person name="de la Bastide M."/>
            <person name="Hamilton J.P."/>
            <person name="Kanamori H."/>
            <person name="McCombie W.R."/>
            <person name="Ouyang S."/>
            <person name="Schwartz D.C."/>
            <person name="Tanaka T."/>
            <person name="Wu J."/>
            <person name="Zhou S."/>
            <person name="Childs K.L."/>
            <person name="Davidson R.M."/>
            <person name="Lin H."/>
            <person name="Quesada-Ocampo L."/>
            <person name="Vaillancourt B."/>
            <person name="Sakai H."/>
            <person name="Lee S.S."/>
            <person name="Kim J."/>
            <person name="Numa H."/>
            <person name="Itoh T."/>
            <person name="Buell C.R."/>
            <person name="Matsumoto T."/>
        </authorList>
    </citation>
    <scope>GENOME REANNOTATION</scope>
    <source>
        <strain>cv. Nipponbare</strain>
    </source>
</reference>
<reference key="5">
    <citation type="journal article" date="2005" name="PLoS Biol.">
        <title>The genomes of Oryza sativa: a history of duplications.</title>
        <authorList>
            <person name="Yu J."/>
            <person name="Wang J."/>
            <person name="Lin W."/>
            <person name="Li S."/>
            <person name="Li H."/>
            <person name="Zhou J."/>
            <person name="Ni P."/>
            <person name="Dong W."/>
            <person name="Hu S."/>
            <person name="Zeng C."/>
            <person name="Zhang J."/>
            <person name="Zhang Y."/>
            <person name="Li R."/>
            <person name="Xu Z."/>
            <person name="Li S."/>
            <person name="Li X."/>
            <person name="Zheng H."/>
            <person name="Cong L."/>
            <person name="Lin L."/>
            <person name="Yin J."/>
            <person name="Geng J."/>
            <person name="Li G."/>
            <person name="Shi J."/>
            <person name="Liu J."/>
            <person name="Lv H."/>
            <person name="Li J."/>
            <person name="Wang J."/>
            <person name="Deng Y."/>
            <person name="Ran L."/>
            <person name="Shi X."/>
            <person name="Wang X."/>
            <person name="Wu Q."/>
            <person name="Li C."/>
            <person name="Ren X."/>
            <person name="Wang J."/>
            <person name="Wang X."/>
            <person name="Li D."/>
            <person name="Liu D."/>
            <person name="Zhang X."/>
            <person name="Ji Z."/>
            <person name="Zhao W."/>
            <person name="Sun Y."/>
            <person name="Zhang Z."/>
            <person name="Bao J."/>
            <person name="Han Y."/>
            <person name="Dong L."/>
            <person name="Ji J."/>
            <person name="Chen P."/>
            <person name="Wu S."/>
            <person name="Liu J."/>
            <person name="Xiao Y."/>
            <person name="Bu D."/>
            <person name="Tan J."/>
            <person name="Yang L."/>
            <person name="Ye C."/>
            <person name="Zhang J."/>
            <person name="Xu J."/>
            <person name="Zhou Y."/>
            <person name="Yu Y."/>
            <person name="Zhang B."/>
            <person name="Zhuang S."/>
            <person name="Wei H."/>
            <person name="Liu B."/>
            <person name="Lei M."/>
            <person name="Yu H."/>
            <person name="Li Y."/>
            <person name="Xu H."/>
            <person name="Wei S."/>
            <person name="He X."/>
            <person name="Fang L."/>
            <person name="Zhang Z."/>
            <person name="Zhang Y."/>
            <person name="Huang X."/>
            <person name="Su Z."/>
            <person name="Tong W."/>
            <person name="Li J."/>
            <person name="Tong Z."/>
            <person name="Li S."/>
            <person name="Ye J."/>
            <person name="Wang L."/>
            <person name="Fang L."/>
            <person name="Lei T."/>
            <person name="Chen C.-S."/>
            <person name="Chen H.-C."/>
            <person name="Xu Z."/>
            <person name="Li H."/>
            <person name="Huang H."/>
            <person name="Zhang F."/>
            <person name="Xu H."/>
            <person name="Li N."/>
            <person name="Zhao C."/>
            <person name="Li S."/>
            <person name="Dong L."/>
            <person name="Huang Y."/>
            <person name="Li L."/>
            <person name="Xi Y."/>
            <person name="Qi Q."/>
            <person name="Li W."/>
            <person name="Zhang B."/>
            <person name="Hu W."/>
            <person name="Zhang Y."/>
            <person name="Tian X."/>
            <person name="Jiao Y."/>
            <person name="Liang X."/>
            <person name="Jin J."/>
            <person name="Gao L."/>
            <person name="Zheng W."/>
            <person name="Hao B."/>
            <person name="Liu S.-M."/>
            <person name="Wang W."/>
            <person name="Yuan L."/>
            <person name="Cao M."/>
            <person name="McDermott J."/>
            <person name="Samudrala R."/>
            <person name="Wang J."/>
            <person name="Wong G.K.-S."/>
            <person name="Yang H."/>
        </authorList>
    </citation>
    <scope>NUCLEOTIDE SEQUENCE [LARGE SCALE GENOMIC DNA]</scope>
    <source>
        <strain>cv. Nipponbare</strain>
    </source>
</reference>
<reference key="6">
    <citation type="journal article" date="2003" name="Science">
        <title>Collection, mapping, and annotation of over 28,000 cDNA clones from japonica rice.</title>
        <authorList>
            <consortium name="The rice full-length cDNA consortium"/>
        </authorList>
    </citation>
    <scope>NUCLEOTIDE SEQUENCE [LARGE SCALE MRNA]</scope>
    <source>
        <strain>cv. Nipponbare</strain>
    </source>
</reference>
<reference key="7">
    <citation type="journal article" date="2009" name="Plant Mol. Biol.">
        <title>Identification and expression profiling analysis of TIFY family genes involved in stress and phytohormone responses in rice.</title>
        <authorList>
            <person name="Ye H."/>
            <person name="Du H."/>
            <person name="Tang N."/>
            <person name="Li X."/>
            <person name="Xiong L."/>
        </authorList>
    </citation>
    <scope>GENE FAMILY</scope>
    <scope>NOMENCLATURE</scope>
    <scope>INDUCTION</scope>
</reference>
<reference key="8">
    <citation type="journal article" date="2011" name="Plant J.">
        <title>OsbHLH148, a basic helix-loop-helix protein, interacts with OsJAZ proteins in a jasmonate signaling pathway leading to drought tolerance in rice.</title>
        <authorList>
            <person name="Seo J.S."/>
            <person name="Joo J."/>
            <person name="Kim M.J."/>
            <person name="Kim Y.K."/>
            <person name="Nahm B.H."/>
            <person name="Song S.I."/>
            <person name="Cheong J.J."/>
            <person name="Lee J.S."/>
            <person name="Kim J.K."/>
            <person name="Choi Y.D."/>
        </authorList>
    </citation>
    <scope>INTERACTION WITH BHLH148</scope>
    <scope>INDUCTION</scope>
</reference>
<reference key="9">
    <citation type="journal article" date="2013" name="Plant Cell">
        <title>RICE SALT SENSITIVE3 forms a ternary complex with JAZ and class-C bHLH factors and regulates jasmonate-induced gene expression and root cell elongation.</title>
        <authorList>
            <person name="Toda Y."/>
            <person name="Tanaka M."/>
            <person name="Ogawa D."/>
            <person name="Kurata K."/>
            <person name="Kurotani K."/>
            <person name="Habu Y."/>
            <person name="Ando T."/>
            <person name="Sugimoto K."/>
            <person name="Mitsuda N."/>
            <person name="Katoh E."/>
            <person name="Abe K."/>
            <person name="Miyao A."/>
            <person name="Hirochika H."/>
            <person name="Hattori T."/>
            <person name="Takeda S."/>
        </authorList>
    </citation>
    <scope>INTERACTION WITH RSS3</scope>
    <source>
        <strain>cv. Nipponbare</strain>
    </source>
</reference>
<reference key="10">
    <citation type="journal article" date="2013" name="PLoS ONE">
        <title>Oryza sativa COI homologues restore jasmonate signal transduction in Arabidopsis coi1-1 mutants.</title>
        <authorList>
            <person name="Lee H.Y."/>
            <person name="Seo J.S."/>
            <person name="Cho J.H."/>
            <person name="Jung H."/>
            <person name="Kim J.K."/>
            <person name="Lee J.S."/>
            <person name="Rhee S."/>
            <person name="Do Choi Y."/>
        </authorList>
    </citation>
    <scope>INTERACTION WITH COI1A; COI1B AND COI2</scope>
</reference>
<gene>
    <name evidence="10" type="primary">TIFY11C</name>
    <name evidence="10" type="synonym">JAZ11</name>
    <name evidence="15" type="ordered locus">Os03g0180900</name>
    <name evidence="14" type="ordered locus">LOC_Os03g08320</name>
    <name type="ORF">OsJ_09657</name>
    <name evidence="13" type="ORF">OSJNBa0050H14.23</name>
    <name evidence="12" type="ORF">OSJNBb0076N15.9</name>
</gene>
<sequence length="209" mass="22035">MAGSSEQQLVANAAATTVAGNGSRFAVTCGLLRQYMKEHSGSNGGGGFLPAVTAMSLMTGGADAEEEAPEVRKTMELFPQQAGTLKDTQERKEITEKAQLTIFYGGSVVVFDDFPAEKAGELMKLAGSRDSTAAAAVSDAGAAAGQPCLPDMPIARKVSLQRFLEKRKNRIVVAEPLPESEKKEAESSKRAKKDDGGASWLQVNPTLSL</sequence>
<dbReference type="EMBL" id="AC125472">
    <property type="protein sequence ID" value="AAO13483.1"/>
    <property type="molecule type" value="Genomic_DNA"/>
</dbReference>
<dbReference type="EMBL" id="AC126223">
    <property type="protein sequence ID" value="AAN65439.1"/>
    <property type="molecule type" value="Genomic_DNA"/>
</dbReference>
<dbReference type="EMBL" id="DP000009">
    <property type="protein sequence ID" value="ABF94310.1"/>
    <property type="molecule type" value="Genomic_DNA"/>
</dbReference>
<dbReference type="EMBL" id="AP008209">
    <property type="protein sequence ID" value="BAF11081.1"/>
    <property type="molecule type" value="Genomic_DNA"/>
</dbReference>
<dbReference type="EMBL" id="AP014959">
    <property type="protein sequence ID" value="BAS82623.1"/>
    <property type="molecule type" value="Genomic_DNA"/>
</dbReference>
<dbReference type="EMBL" id="CM000140">
    <property type="protein sequence ID" value="EAZ25817.1"/>
    <property type="molecule type" value="Genomic_DNA"/>
</dbReference>
<dbReference type="EMBL" id="AK073589">
    <property type="protein sequence ID" value="BAG93537.1"/>
    <property type="molecule type" value="mRNA"/>
</dbReference>
<dbReference type="RefSeq" id="XP_015633146.1">
    <property type="nucleotide sequence ID" value="XM_015777660.1"/>
</dbReference>
<dbReference type="SMR" id="Q8GRS2"/>
<dbReference type="FunCoup" id="Q8GRS2">
    <property type="interactions" value="2"/>
</dbReference>
<dbReference type="STRING" id="39947.Q8GRS2"/>
<dbReference type="PaxDb" id="39947-Q8GRS2"/>
<dbReference type="EnsemblPlants" id="Os03t0180900-01">
    <property type="protein sequence ID" value="Os03t0180900-01"/>
    <property type="gene ID" value="Os03g0180900"/>
</dbReference>
<dbReference type="Gramene" id="Os03t0180900-01">
    <property type="protein sequence ID" value="Os03t0180900-01"/>
    <property type="gene ID" value="Os03g0180900"/>
</dbReference>
<dbReference type="KEGG" id="dosa:Os03g0180900"/>
<dbReference type="eggNOG" id="ENOG502RIU4">
    <property type="taxonomic scope" value="Eukaryota"/>
</dbReference>
<dbReference type="HOGENOM" id="CLU_051749_3_0_1"/>
<dbReference type="InParanoid" id="Q8GRS2"/>
<dbReference type="OMA" id="LMKFAGS"/>
<dbReference type="OrthoDB" id="1937734at2759"/>
<dbReference type="PlantReactome" id="R-OSA-6787011">
    <property type="pathway name" value="Jasmonic acid signaling"/>
</dbReference>
<dbReference type="Proteomes" id="UP000000763">
    <property type="component" value="Chromosome 3"/>
</dbReference>
<dbReference type="Proteomes" id="UP000007752">
    <property type="component" value="Chromosome 3"/>
</dbReference>
<dbReference type="Proteomes" id="UP000059680">
    <property type="component" value="Chromosome 3"/>
</dbReference>
<dbReference type="GO" id="GO:0005634">
    <property type="term" value="C:nucleus"/>
    <property type="evidence" value="ECO:0000318"/>
    <property type="project" value="GO_Central"/>
</dbReference>
<dbReference type="GO" id="GO:0031347">
    <property type="term" value="P:regulation of defense response"/>
    <property type="evidence" value="ECO:0000318"/>
    <property type="project" value="GO_Central"/>
</dbReference>
<dbReference type="GO" id="GO:2000022">
    <property type="term" value="P:regulation of jasmonic acid mediated signaling pathway"/>
    <property type="evidence" value="ECO:0000318"/>
    <property type="project" value="GO_Central"/>
</dbReference>
<dbReference type="GO" id="GO:0009611">
    <property type="term" value="P:response to wounding"/>
    <property type="evidence" value="ECO:0000318"/>
    <property type="project" value="GO_Central"/>
</dbReference>
<dbReference type="InterPro" id="IPR018467">
    <property type="entry name" value="CCT_CS"/>
</dbReference>
<dbReference type="InterPro" id="IPR040390">
    <property type="entry name" value="TIFY/JAZ"/>
</dbReference>
<dbReference type="InterPro" id="IPR010399">
    <property type="entry name" value="Tify_dom"/>
</dbReference>
<dbReference type="PANTHER" id="PTHR33077:SF117">
    <property type="entry name" value="PROTEIN TIFY 11C"/>
    <property type="match status" value="1"/>
</dbReference>
<dbReference type="PANTHER" id="PTHR33077">
    <property type="entry name" value="PROTEIN TIFY 4A-RELATED-RELATED"/>
    <property type="match status" value="1"/>
</dbReference>
<dbReference type="Pfam" id="PF09425">
    <property type="entry name" value="Jas_motif"/>
    <property type="match status" value="1"/>
</dbReference>
<dbReference type="Pfam" id="PF06200">
    <property type="entry name" value="tify"/>
    <property type="match status" value="1"/>
</dbReference>
<dbReference type="SMART" id="SM00979">
    <property type="entry name" value="TIFY"/>
    <property type="match status" value="1"/>
</dbReference>
<dbReference type="PROSITE" id="PS51320">
    <property type="entry name" value="TIFY"/>
    <property type="match status" value="1"/>
</dbReference>
<protein>
    <recommendedName>
        <fullName evidence="11">Protein TIFY 11c</fullName>
        <shortName evidence="10">OsTIFY11c</shortName>
    </recommendedName>
    <alternativeName>
        <fullName evidence="11">Jasmonate ZIM domain-containing protein 11</fullName>
        <shortName evidence="10">OsJAZ11</shortName>
    </alternativeName>
    <alternativeName>
        <fullName>OsJAZ2</fullName>
    </alternativeName>
</protein>
<keyword id="KW-1184">Jasmonic acid signaling pathway</keyword>
<keyword id="KW-0539">Nucleus</keyword>
<keyword id="KW-1185">Reference proteome</keyword>
<keyword id="KW-0804">Transcription</keyword>
<keyword id="KW-0805">Transcription regulation</keyword>
<keyword id="KW-0832">Ubl conjugation</keyword>
<organism>
    <name type="scientific">Oryza sativa subsp. japonica</name>
    <name type="common">Rice</name>
    <dbReference type="NCBI Taxonomy" id="39947"/>
    <lineage>
        <taxon>Eukaryota</taxon>
        <taxon>Viridiplantae</taxon>
        <taxon>Streptophyta</taxon>
        <taxon>Embryophyta</taxon>
        <taxon>Tracheophyta</taxon>
        <taxon>Spermatophyta</taxon>
        <taxon>Magnoliopsida</taxon>
        <taxon>Liliopsida</taxon>
        <taxon>Poales</taxon>
        <taxon>Poaceae</taxon>
        <taxon>BOP clade</taxon>
        <taxon>Oryzoideae</taxon>
        <taxon>Oryzeae</taxon>
        <taxon>Oryzinae</taxon>
        <taxon>Oryza</taxon>
        <taxon>Oryza sativa</taxon>
    </lineage>
</organism>
<proteinExistence type="evidence at protein level"/>